<evidence type="ECO:0000255" key="1">
    <source>
        <dbReference type="HAMAP-Rule" id="MF_00368"/>
    </source>
</evidence>
<evidence type="ECO:0000305" key="2"/>
<comment type="function">
    <text evidence="1">Forms part of the ribosomal stalk which helps the ribosome interact with GTP-bound translation factors. Is thus essential for accurate translation.</text>
</comment>
<comment type="subunit">
    <text evidence="1">Homodimer. Part of the ribosomal stalk of the 50S ribosomal subunit. Forms a multimeric L10(L12)X complex, where L10 forms an elongated spine to which 2 to 4 L12 dimers bind in a sequential fashion. Binds GTP-bound translation factors.</text>
</comment>
<comment type="similarity">
    <text evidence="1">Belongs to the bacterial ribosomal protein bL12 family.</text>
</comment>
<protein>
    <recommendedName>
        <fullName evidence="1">Large ribosomal subunit protein bL12</fullName>
    </recommendedName>
    <alternativeName>
        <fullName evidence="2">50S ribosomal protein L7/L12</fullName>
    </alternativeName>
</protein>
<sequence length="123" mass="12695">MSKEEIIQAIKGMSVLELNELVKACEEEFGVSAAAPVAVAGGAAAGGGDAAEEKTEFDVVLKASGSEKIKVIKAVREVTGLGLKEAKALVDGAPKPLKEAVSKEDAEAIKAKFEEIGAEIELK</sequence>
<organism>
    <name type="scientific">Clostridium kluyveri (strain ATCC 8527 / DSM 555 / NBRC 12016 / NCIMB 10680 / K1)</name>
    <dbReference type="NCBI Taxonomy" id="431943"/>
    <lineage>
        <taxon>Bacteria</taxon>
        <taxon>Bacillati</taxon>
        <taxon>Bacillota</taxon>
        <taxon>Clostridia</taxon>
        <taxon>Eubacteriales</taxon>
        <taxon>Clostridiaceae</taxon>
        <taxon>Clostridium</taxon>
    </lineage>
</organism>
<proteinExistence type="inferred from homology"/>
<keyword id="KW-1185">Reference proteome</keyword>
<keyword id="KW-0687">Ribonucleoprotein</keyword>
<keyword id="KW-0689">Ribosomal protein</keyword>
<feature type="chain" id="PRO_1000079788" description="Large ribosomal subunit protein bL12">
    <location>
        <begin position="1"/>
        <end position="123"/>
    </location>
</feature>
<dbReference type="EMBL" id="CP000673">
    <property type="protein sequence ID" value="EDK32269.1"/>
    <property type="molecule type" value="Genomic_DNA"/>
</dbReference>
<dbReference type="RefSeq" id="WP_011988795.1">
    <property type="nucleotide sequence ID" value="NC_009706.1"/>
</dbReference>
<dbReference type="SMR" id="A5N4N8"/>
<dbReference type="STRING" id="431943.CKL_0215"/>
<dbReference type="KEGG" id="ckl:CKL_0215"/>
<dbReference type="eggNOG" id="COG0222">
    <property type="taxonomic scope" value="Bacteria"/>
</dbReference>
<dbReference type="HOGENOM" id="CLU_086499_3_2_9"/>
<dbReference type="Proteomes" id="UP000002411">
    <property type="component" value="Chromosome"/>
</dbReference>
<dbReference type="GO" id="GO:0022625">
    <property type="term" value="C:cytosolic large ribosomal subunit"/>
    <property type="evidence" value="ECO:0007669"/>
    <property type="project" value="TreeGrafter"/>
</dbReference>
<dbReference type="GO" id="GO:0003729">
    <property type="term" value="F:mRNA binding"/>
    <property type="evidence" value="ECO:0007669"/>
    <property type="project" value="TreeGrafter"/>
</dbReference>
<dbReference type="GO" id="GO:0003735">
    <property type="term" value="F:structural constituent of ribosome"/>
    <property type="evidence" value="ECO:0007669"/>
    <property type="project" value="InterPro"/>
</dbReference>
<dbReference type="GO" id="GO:0006412">
    <property type="term" value="P:translation"/>
    <property type="evidence" value="ECO:0007669"/>
    <property type="project" value="UniProtKB-UniRule"/>
</dbReference>
<dbReference type="CDD" id="cd00387">
    <property type="entry name" value="Ribosomal_L7_L12"/>
    <property type="match status" value="1"/>
</dbReference>
<dbReference type="FunFam" id="1.20.5.710:FF:000002">
    <property type="entry name" value="50S ribosomal protein L7/L12"/>
    <property type="match status" value="1"/>
</dbReference>
<dbReference type="FunFam" id="3.30.1390.10:FF:000001">
    <property type="entry name" value="50S ribosomal protein L7/L12"/>
    <property type="match status" value="1"/>
</dbReference>
<dbReference type="Gene3D" id="3.30.1390.10">
    <property type="match status" value="1"/>
</dbReference>
<dbReference type="Gene3D" id="1.20.5.710">
    <property type="entry name" value="Single helix bin"/>
    <property type="match status" value="1"/>
</dbReference>
<dbReference type="HAMAP" id="MF_00368">
    <property type="entry name" value="Ribosomal_bL12"/>
    <property type="match status" value="1"/>
</dbReference>
<dbReference type="InterPro" id="IPR000206">
    <property type="entry name" value="Ribosomal_bL12"/>
</dbReference>
<dbReference type="InterPro" id="IPR013823">
    <property type="entry name" value="Ribosomal_bL12_C"/>
</dbReference>
<dbReference type="InterPro" id="IPR014719">
    <property type="entry name" value="Ribosomal_bL12_C/ClpS-like"/>
</dbReference>
<dbReference type="InterPro" id="IPR008932">
    <property type="entry name" value="Ribosomal_bL12_oligo"/>
</dbReference>
<dbReference type="InterPro" id="IPR036235">
    <property type="entry name" value="Ribosomal_bL12_oligo_N_sf"/>
</dbReference>
<dbReference type="NCBIfam" id="TIGR00855">
    <property type="entry name" value="L12"/>
    <property type="match status" value="1"/>
</dbReference>
<dbReference type="PANTHER" id="PTHR45987">
    <property type="entry name" value="39S RIBOSOMAL PROTEIN L12"/>
    <property type="match status" value="1"/>
</dbReference>
<dbReference type="PANTHER" id="PTHR45987:SF4">
    <property type="entry name" value="LARGE RIBOSOMAL SUBUNIT PROTEIN BL12M"/>
    <property type="match status" value="1"/>
</dbReference>
<dbReference type="Pfam" id="PF00542">
    <property type="entry name" value="Ribosomal_L12"/>
    <property type="match status" value="1"/>
</dbReference>
<dbReference type="Pfam" id="PF16320">
    <property type="entry name" value="Ribosomal_L12_N"/>
    <property type="match status" value="1"/>
</dbReference>
<dbReference type="SUPFAM" id="SSF54736">
    <property type="entry name" value="ClpS-like"/>
    <property type="match status" value="1"/>
</dbReference>
<dbReference type="SUPFAM" id="SSF48300">
    <property type="entry name" value="Ribosomal protein L7/12, oligomerisation (N-terminal) domain"/>
    <property type="match status" value="1"/>
</dbReference>
<accession>A5N4N8</accession>
<gene>
    <name evidence="1" type="primary">rplL</name>
    <name type="ordered locus">CKL_0215</name>
</gene>
<reference key="1">
    <citation type="journal article" date="2008" name="Proc. Natl. Acad. Sci. U.S.A.">
        <title>The genome of Clostridium kluyveri, a strict anaerobe with unique metabolic features.</title>
        <authorList>
            <person name="Seedorf H."/>
            <person name="Fricke W.F."/>
            <person name="Veith B."/>
            <person name="Brueggemann H."/>
            <person name="Liesegang H."/>
            <person name="Strittmatter A."/>
            <person name="Miethke M."/>
            <person name="Buckel W."/>
            <person name="Hinderberger J."/>
            <person name="Li F."/>
            <person name="Hagemeier C."/>
            <person name="Thauer R.K."/>
            <person name="Gottschalk G."/>
        </authorList>
    </citation>
    <scope>NUCLEOTIDE SEQUENCE [LARGE SCALE GENOMIC DNA]</scope>
    <source>
        <strain>ATCC 8527 / DSM 555 / NBRC 12016 / NCIMB 10680 / K1</strain>
    </source>
</reference>
<name>RL7_CLOK5</name>